<comment type="function">
    <text evidence="1">Binds directly to 23S rRNA. Probably involved in E site tRNA release.</text>
</comment>
<comment type="function">
    <text evidence="1">Protein L1 is also a translational repressor protein, it controls the translation of its operon by binding to its mRNA.</text>
</comment>
<comment type="subunit">
    <text evidence="1">Part of the 50S ribosomal subunit.</text>
</comment>
<comment type="similarity">
    <text evidence="1">Belongs to the universal ribosomal protein uL1 family.</text>
</comment>
<sequence>MDSDKILNAVKEARTLAKPRNFTQSVDLIVNLKELDLTRPENRLKEQIVLPSGRGKDVAIAVIAKGDLAAQAEDMGLTVIRQEELEELGKNKKTAKKIANAHGFFIAQADMMPLVGKSLGPVLGPRGKMPQPVPANANLAPLVARFQKTVAINTRDKSLFQVYIGHESMSDEELAANAEAILNVVSKKYEKGLYHVKSAFTKLTMGAAAPIEK</sequence>
<protein>
    <recommendedName>
        <fullName evidence="1">Large ribosomal subunit protein uL1</fullName>
    </recommendedName>
    <alternativeName>
        <fullName evidence="2">50S ribosomal protein L1</fullName>
    </alternativeName>
</protein>
<evidence type="ECO:0000255" key="1">
    <source>
        <dbReference type="HAMAP-Rule" id="MF_01318"/>
    </source>
</evidence>
<evidence type="ECO:0000305" key="2"/>
<accession>A6VIQ0</accession>
<name>RL1_METM7</name>
<reference key="1">
    <citation type="submission" date="2007-06" db="EMBL/GenBank/DDBJ databases">
        <title>Complete sequence of Methanococcus maripaludis C7.</title>
        <authorList>
            <consortium name="US DOE Joint Genome Institute"/>
            <person name="Copeland A."/>
            <person name="Lucas S."/>
            <person name="Lapidus A."/>
            <person name="Barry K."/>
            <person name="Glavina del Rio T."/>
            <person name="Dalin E."/>
            <person name="Tice H."/>
            <person name="Pitluck S."/>
            <person name="Clum A."/>
            <person name="Schmutz J."/>
            <person name="Larimer F."/>
            <person name="Land M."/>
            <person name="Hauser L."/>
            <person name="Kyrpides N."/>
            <person name="Anderson I."/>
            <person name="Sieprawska-Lupa M."/>
            <person name="Whitman W.B."/>
            <person name="Richardson P."/>
        </authorList>
    </citation>
    <scope>NUCLEOTIDE SEQUENCE [LARGE SCALE GENOMIC DNA]</scope>
    <source>
        <strain>C7 / ATCC BAA-1331</strain>
    </source>
</reference>
<keyword id="KW-0678">Repressor</keyword>
<keyword id="KW-0687">Ribonucleoprotein</keyword>
<keyword id="KW-0689">Ribosomal protein</keyword>
<keyword id="KW-0694">RNA-binding</keyword>
<keyword id="KW-0699">rRNA-binding</keyword>
<keyword id="KW-0810">Translation regulation</keyword>
<keyword id="KW-0820">tRNA-binding</keyword>
<dbReference type="EMBL" id="CP000745">
    <property type="protein sequence ID" value="ABR66326.1"/>
    <property type="molecule type" value="Genomic_DNA"/>
</dbReference>
<dbReference type="SMR" id="A6VIQ0"/>
<dbReference type="STRING" id="426368.MmarC7_1263"/>
<dbReference type="KEGG" id="mmz:MmarC7_1263"/>
<dbReference type="eggNOG" id="arCOG04289">
    <property type="taxonomic scope" value="Archaea"/>
</dbReference>
<dbReference type="HOGENOM" id="CLU_062853_4_0_2"/>
<dbReference type="OrthoDB" id="10382at2157"/>
<dbReference type="GO" id="GO:0015934">
    <property type="term" value="C:large ribosomal subunit"/>
    <property type="evidence" value="ECO:0007669"/>
    <property type="project" value="InterPro"/>
</dbReference>
<dbReference type="GO" id="GO:0019843">
    <property type="term" value="F:rRNA binding"/>
    <property type="evidence" value="ECO:0007669"/>
    <property type="project" value="UniProtKB-UniRule"/>
</dbReference>
<dbReference type="GO" id="GO:0003735">
    <property type="term" value="F:structural constituent of ribosome"/>
    <property type="evidence" value="ECO:0007669"/>
    <property type="project" value="InterPro"/>
</dbReference>
<dbReference type="GO" id="GO:0000049">
    <property type="term" value="F:tRNA binding"/>
    <property type="evidence" value="ECO:0007669"/>
    <property type="project" value="UniProtKB-KW"/>
</dbReference>
<dbReference type="GO" id="GO:0006417">
    <property type="term" value="P:regulation of translation"/>
    <property type="evidence" value="ECO:0007669"/>
    <property type="project" value="UniProtKB-KW"/>
</dbReference>
<dbReference type="GO" id="GO:0006412">
    <property type="term" value="P:translation"/>
    <property type="evidence" value="ECO:0007669"/>
    <property type="project" value="UniProtKB-UniRule"/>
</dbReference>
<dbReference type="CDD" id="cd00403">
    <property type="entry name" value="Ribosomal_L1"/>
    <property type="match status" value="1"/>
</dbReference>
<dbReference type="FunFam" id="3.40.50.790:FF:000005">
    <property type="entry name" value="50S ribosomal protein L1"/>
    <property type="match status" value="1"/>
</dbReference>
<dbReference type="Gene3D" id="3.30.190.20">
    <property type="match status" value="1"/>
</dbReference>
<dbReference type="Gene3D" id="3.40.50.790">
    <property type="match status" value="1"/>
</dbReference>
<dbReference type="HAMAP" id="MF_01318_A">
    <property type="entry name" value="Ribosomal_uL1_A"/>
    <property type="match status" value="1"/>
</dbReference>
<dbReference type="InterPro" id="IPR002143">
    <property type="entry name" value="Ribosomal_uL1"/>
</dbReference>
<dbReference type="InterPro" id="IPR023674">
    <property type="entry name" value="Ribosomal_uL1-like"/>
</dbReference>
<dbReference type="InterPro" id="IPR028364">
    <property type="entry name" value="Ribosomal_uL1/biogenesis"/>
</dbReference>
<dbReference type="InterPro" id="IPR016095">
    <property type="entry name" value="Ribosomal_uL1_3-a/b-sand"/>
</dbReference>
<dbReference type="InterPro" id="IPR023669">
    <property type="entry name" value="Ribosomal_uL1_arc"/>
</dbReference>
<dbReference type="InterPro" id="IPR023673">
    <property type="entry name" value="Ribosomal_uL1_CS"/>
</dbReference>
<dbReference type="NCBIfam" id="NF003244">
    <property type="entry name" value="PRK04203.1"/>
    <property type="match status" value="1"/>
</dbReference>
<dbReference type="PANTHER" id="PTHR36427">
    <property type="entry name" value="54S RIBOSOMAL PROTEIN L1, MITOCHONDRIAL"/>
    <property type="match status" value="1"/>
</dbReference>
<dbReference type="PANTHER" id="PTHR36427:SF3">
    <property type="entry name" value="LARGE RIBOSOMAL SUBUNIT PROTEIN UL1M"/>
    <property type="match status" value="1"/>
</dbReference>
<dbReference type="Pfam" id="PF00687">
    <property type="entry name" value="Ribosomal_L1"/>
    <property type="match status" value="1"/>
</dbReference>
<dbReference type="PIRSF" id="PIRSF002155">
    <property type="entry name" value="Ribosomal_L1"/>
    <property type="match status" value="1"/>
</dbReference>
<dbReference type="SUPFAM" id="SSF56808">
    <property type="entry name" value="Ribosomal protein L1"/>
    <property type="match status" value="1"/>
</dbReference>
<dbReference type="PROSITE" id="PS01199">
    <property type="entry name" value="RIBOSOMAL_L1"/>
    <property type="match status" value="1"/>
</dbReference>
<proteinExistence type="inferred from homology"/>
<gene>
    <name evidence="1" type="primary">rpl1</name>
    <name type="ordered locus">MmarC7_1263</name>
</gene>
<organism>
    <name type="scientific">Methanococcus maripaludis (strain C7 / ATCC BAA-1331)</name>
    <dbReference type="NCBI Taxonomy" id="426368"/>
    <lineage>
        <taxon>Archaea</taxon>
        <taxon>Methanobacteriati</taxon>
        <taxon>Methanobacteriota</taxon>
        <taxon>Methanomada group</taxon>
        <taxon>Methanococci</taxon>
        <taxon>Methanococcales</taxon>
        <taxon>Methanococcaceae</taxon>
        <taxon>Methanococcus</taxon>
    </lineage>
</organism>
<feature type="chain" id="PRO_1000051911" description="Large ribosomal subunit protein uL1">
    <location>
        <begin position="1"/>
        <end position="213"/>
    </location>
</feature>